<feature type="chain" id="PRO_0000130550" description="Large ribosomal subunit protein uL29">
    <location>
        <begin position="1"/>
        <end position="124"/>
    </location>
</feature>
<sequence length="124" mass="14365">MSSGKVKAGELWNKSKDDLTKQLAELKTELGQLRIQKVASSGSKLNRIHDIRKSIARVLTVINAKQRAQLRLFYKNKKYAPLDLRAKQTRAIRRRLSPDEKSRVLEKTKKRTVHFPQRKFAIKA</sequence>
<reference key="1">
    <citation type="submission" date="2002-06" db="EMBL/GenBank/DDBJ databases">
        <title>Triticum aestivum putative ribosomal protein L35 gene.</title>
        <authorList>
            <person name="Lu Z.-X."/>
            <person name="Laroche A."/>
            <person name="Gaudet D."/>
        </authorList>
    </citation>
    <scope>NUCLEOTIDE SEQUENCE [MRNA]</scope>
</reference>
<reference key="2">
    <citation type="journal article" date="2006" name="Nature">
        <title>Following the signal sequence from ribosomal tunnel exit to signal recognition particle.</title>
        <authorList>
            <person name="Halic M."/>
            <person name="Blau M."/>
            <person name="Becker T."/>
            <person name="Mielke T."/>
            <person name="Pool M.R."/>
            <person name="Wild K."/>
            <person name="Sinning I."/>
            <person name="Beckmann R."/>
        </authorList>
    </citation>
    <scope>STRUCTURE BY ELECTRON MICROSCOPY (8.0 ANGSTROMS) OF THE 80S WHEAT GERM RIBOSOME IN COMPLEX WITH THE NASCENT CHAIN AND THE MAMMALIAN SIGNAL RECOGNITION PARTICLE</scope>
</reference>
<reference key="3">
    <citation type="journal article" date="2006" name="Science">
        <title>Signal recognition particle receptor exposes the ribosomal translocon binding site.</title>
        <authorList>
            <person name="Halic M."/>
            <person name="Gartmann M."/>
            <person name="Schlenker O."/>
            <person name="Mielke T."/>
            <person name="Pool M.R."/>
            <person name="Sinning I."/>
            <person name="Beckmann R."/>
        </authorList>
    </citation>
    <scope>STRUCTURE BY ELECTRON MICROSCOPY (7.4 ANGSTROMS) OF SIGNAL RECOGNITION PARTICLE IN COMPLEX WITH THE 80S RIBOSOME AND THE SRP RECEPTOR</scope>
</reference>
<organism>
    <name type="scientific">Triticum aestivum</name>
    <name type="common">Wheat</name>
    <dbReference type="NCBI Taxonomy" id="4565"/>
    <lineage>
        <taxon>Eukaryota</taxon>
        <taxon>Viridiplantae</taxon>
        <taxon>Streptophyta</taxon>
        <taxon>Embryophyta</taxon>
        <taxon>Tracheophyta</taxon>
        <taxon>Spermatophyta</taxon>
        <taxon>Magnoliopsida</taxon>
        <taxon>Liliopsida</taxon>
        <taxon>Poales</taxon>
        <taxon>Poaceae</taxon>
        <taxon>BOP clade</taxon>
        <taxon>Pooideae</taxon>
        <taxon>Triticodae</taxon>
        <taxon>Triticeae</taxon>
        <taxon>Triticinae</taxon>
        <taxon>Triticum</taxon>
    </lineage>
</organism>
<evidence type="ECO:0000305" key="1"/>
<protein>
    <recommendedName>
        <fullName evidence="1">Large ribosomal subunit protein uL29</fullName>
    </recommendedName>
    <alternativeName>
        <fullName>60S ribosomal protein L35</fullName>
    </alternativeName>
</protein>
<accession>Q8L805</accession>
<gene>
    <name type="primary">RPL35</name>
</gene>
<keyword id="KW-0002">3D-structure</keyword>
<keyword id="KW-1185">Reference proteome</keyword>
<keyword id="KW-0687">Ribonucleoprotein</keyword>
<keyword id="KW-0689">Ribosomal protein</keyword>
<dbReference type="EMBL" id="AY123419">
    <property type="protein sequence ID" value="AAM92709.1"/>
    <property type="molecule type" value="mRNA"/>
</dbReference>
<dbReference type="PDB" id="2GO5">
    <property type="method" value="EM"/>
    <property type="resolution" value="7.40 A"/>
    <property type="chains" value="5=1-124"/>
</dbReference>
<dbReference type="PDB" id="2J37">
    <property type="method" value="EM"/>
    <property type="resolution" value="8.00 A"/>
    <property type="chains" value="5=1-124"/>
</dbReference>
<dbReference type="PDB" id="4V3P">
    <property type="method" value="EM"/>
    <property type="resolution" value="34.00 A"/>
    <property type="chains" value="Lc=1-124"/>
</dbReference>
<dbReference type="PDB" id="4V7E">
    <property type="method" value="EM"/>
    <property type="resolution" value="5.50 A"/>
    <property type="chains" value="Ch=1-124"/>
</dbReference>
<dbReference type="PDB" id="8IP8">
    <property type="method" value="EM"/>
    <property type="resolution" value="2.90 A"/>
    <property type="chains" value="BB=1-124"/>
</dbReference>
<dbReference type="PDB" id="8IPA">
    <property type="method" value="EM"/>
    <property type="resolution" value="3.40 A"/>
    <property type="chains" value="BB=1-124"/>
</dbReference>
<dbReference type="PDB" id="8IPB">
    <property type="method" value="EM"/>
    <property type="resolution" value="3.40 A"/>
    <property type="chains" value="BB=1-124"/>
</dbReference>
<dbReference type="PDB" id="8JIV">
    <property type="method" value="EM"/>
    <property type="resolution" value="2.84 A"/>
    <property type="chains" value="Ch=1-124"/>
</dbReference>
<dbReference type="PDBsum" id="2GO5"/>
<dbReference type="PDBsum" id="2J37"/>
<dbReference type="PDBsum" id="4V3P"/>
<dbReference type="PDBsum" id="4V7E"/>
<dbReference type="PDBsum" id="8IP8"/>
<dbReference type="PDBsum" id="8IPA"/>
<dbReference type="PDBsum" id="8IPB"/>
<dbReference type="PDBsum" id="8JIV"/>
<dbReference type="EMDB" id="EMD-35634"/>
<dbReference type="EMDB" id="EMD-35637"/>
<dbReference type="EMDB" id="EMD-35638"/>
<dbReference type="EMDB" id="EMD-36331"/>
<dbReference type="SMR" id="Q8L805"/>
<dbReference type="STRING" id="4565.Q8L805"/>
<dbReference type="EvolutionaryTrace" id="Q8L805"/>
<dbReference type="Proteomes" id="UP000019116">
    <property type="component" value="Unplaced"/>
</dbReference>
<dbReference type="ExpressionAtlas" id="Q8L805">
    <property type="expression patterns" value="baseline and differential"/>
</dbReference>
<dbReference type="GO" id="GO:0022625">
    <property type="term" value="C:cytosolic large ribosomal subunit"/>
    <property type="evidence" value="ECO:0000318"/>
    <property type="project" value="GO_Central"/>
</dbReference>
<dbReference type="GO" id="GO:0003729">
    <property type="term" value="F:mRNA binding"/>
    <property type="evidence" value="ECO:0000318"/>
    <property type="project" value="GO_Central"/>
</dbReference>
<dbReference type="GO" id="GO:0003735">
    <property type="term" value="F:structural constituent of ribosome"/>
    <property type="evidence" value="ECO:0000318"/>
    <property type="project" value="GO_Central"/>
</dbReference>
<dbReference type="GO" id="GO:0000463">
    <property type="term" value="P:maturation of LSU-rRNA from tricistronic rRNA transcript (SSU-rRNA, 5.8S rRNA, LSU-rRNA)"/>
    <property type="evidence" value="ECO:0000318"/>
    <property type="project" value="GO_Central"/>
</dbReference>
<dbReference type="GO" id="GO:0006412">
    <property type="term" value="P:translation"/>
    <property type="evidence" value="ECO:0007669"/>
    <property type="project" value="InterPro"/>
</dbReference>
<dbReference type="CDD" id="cd00427">
    <property type="entry name" value="Ribosomal_L29_HIP"/>
    <property type="match status" value="1"/>
</dbReference>
<dbReference type="FunFam" id="1.10.287.310:FF:000002">
    <property type="entry name" value="60S ribosomal protein L35"/>
    <property type="match status" value="1"/>
</dbReference>
<dbReference type="FunFam" id="6.10.250.3450:FF:000001">
    <property type="entry name" value="60S ribosomal protein L35"/>
    <property type="match status" value="1"/>
</dbReference>
<dbReference type="Gene3D" id="1.10.287.310">
    <property type="match status" value="1"/>
</dbReference>
<dbReference type="Gene3D" id="6.10.250.3450">
    <property type="match status" value="1"/>
</dbReference>
<dbReference type="HAMAP" id="MF_00374">
    <property type="entry name" value="Ribosomal_uL29"/>
    <property type="match status" value="1"/>
</dbReference>
<dbReference type="InterPro" id="IPR001854">
    <property type="entry name" value="Ribosomal_uL29"/>
</dbReference>
<dbReference type="InterPro" id="IPR045059">
    <property type="entry name" value="Ribosomal_uL29_euk"/>
</dbReference>
<dbReference type="InterPro" id="IPR036049">
    <property type="entry name" value="Ribosomal_uL29_sf"/>
</dbReference>
<dbReference type="NCBIfam" id="TIGR00012">
    <property type="entry name" value="L29"/>
    <property type="match status" value="1"/>
</dbReference>
<dbReference type="PANTHER" id="PTHR45722">
    <property type="entry name" value="60S RIBOSOMAL PROTEIN L35"/>
    <property type="match status" value="1"/>
</dbReference>
<dbReference type="PANTHER" id="PTHR45722:SF2">
    <property type="entry name" value="LARGE RIBOSOMAL SUBUNIT PROTEIN UL29-RELATED"/>
    <property type="match status" value="1"/>
</dbReference>
<dbReference type="Pfam" id="PF00831">
    <property type="entry name" value="Ribosomal_L29"/>
    <property type="match status" value="1"/>
</dbReference>
<dbReference type="SUPFAM" id="SSF46561">
    <property type="entry name" value="Ribosomal protein L29 (L29p)"/>
    <property type="match status" value="1"/>
</dbReference>
<proteinExistence type="evidence at protein level"/>
<name>RL35_WHEAT</name>
<comment type="similarity">
    <text evidence="1">Belongs to the universal ribosomal protein uL29 family.</text>
</comment>